<comment type="subcellular location">
    <subcellularLocation>
        <location evidence="2">Membrane</location>
        <topology evidence="2">Single-pass membrane protein</topology>
    </subcellularLocation>
</comment>
<comment type="similarity">
    <text evidence="2">Belongs to the LRRC3 family.</text>
</comment>
<evidence type="ECO:0000255" key="1"/>
<evidence type="ECO:0000305" key="2"/>
<feature type="signal peptide" evidence="1">
    <location>
        <begin position="1"/>
        <end position="32"/>
    </location>
</feature>
<feature type="chain" id="PRO_0000345963" description="Leucine-rich repeat-containing protein 3">
    <location>
        <begin position="33"/>
        <end position="257"/>
    </location>
</feature>
<feature type="transmembrane region" description="Helical" evidence="1">
    <location>
        <begin position="205"/>
        <end position="225"/>
    </location>
</feature>
<feature type="domain" description="LRRNT">
    <location>
        <begin position="33"/>
        <end position="64"/>
    </location>
</feature>
<feature type="repeat" description="LRR 1">
    <location>
        <begin position="65"/>
        <end position="86"/>
    </location>
</feature>
<feature type="repeat" description="LRR 2">
    <location>
        <begin position="89"/>
        <end position="110"/>
    </location>
</feature>
<feature type="repeat" description="LRR 3">
    <location>
        <begin position="114"/>
        <end position="135"/>
    </location>
</feature>
<feature type="domain" description="LRRCT">
    <location>
        <begin position="145"/>
        <end position="198"/>
    </location>
</feature>
<name>LRRC3_BOVIN</name>
<dbReference type="EMBL" id="BC146159">
    <property type="protein sequence ID" value="AAI46160.1"/>
    <property type="molecule type" value="mRNA"/>
</dbReference>
<dbReference type="RefSeq" id="NP_001092354.1">
    <property type="nucleotide sequence ID" value="NM_001098884.1"/>
</dbReference>
<dbReference type="SMR" id="A6H793"/>
<dbReference type="FunCoup" id="A6H793">
    <property type="interactions" value="44"/>
</dbReference>
<dbReference type="STRING" id="9913.ENSBTAP00000023769"/>
<dbReference type="PaxDb" id="9913-ENSBTAP00000023769"/>
<dbReference type="GeneID" id="506054"/>
<dbReference type="KEGG" id="bta:506054"/>
<dbReference type="CTD" id="81543"/>
<dbReference type="VEuPathDB" id="HostDB:ENSBTAG00000017882"/>
<dbReference type="eggNOG" id="KOG4237">
    <property type="taxonomic scope" value="Eukaryota"/>
</dbReference>
<dbReference type="HOGENOM" id="CLU_064640_0_0_1"/>
<dbReference type="InParanoid" id="A6H793"/>
<dbReference type="OMA" id="QCPDHAG"/>
<dbReference type="OrthoDB" id="6343311at2759"/>
<dbReference type="TreeFam" id="TF327070"/>
<dbReference type="Proteomes" id="UP000009136">
    <property type="component" value="Chromosome 1"/>
</dbReference>
<dbReference type="Bgee" id="ENSBTAG00000017882">
    <property type="expression patterns" value="Expressed in liver and 92 other cell types or tissues"/>
</dbReference>
<dbReference type="GO" id="GO:0005886">
    <property type="term" value="C:plasma membrane"/>
    <property type="evidence" value="ECO:0000318"/>
    <property type="project" value="GO_Central"/>
</dbReference>
<dbReference type="FunFam" id="3.80.10.10:FF:000069">
    <property type="entry name" value="leucine-rich repeat-containing protein 3B"/>
    <property type="match status" value="1"/>
</dbReference>
<dbReference type="Gene3D" id="3.80.10.10">
    <property type="entry name" value="Ribonuclease Inhibitor"/>
    <property type="match status" value="1"/>
</dbReference>
<dbReference type="InterPro" id="IPR001611">
    <property type="entry name" value="Leu-rich_rpt"/>
</dbReference>
<dbReference type="InterPro" id="IPR003591">
    <property type="entry name" value="Leu-rich_rpt_typical-subtyp"/>
</dbReference>
<dbReference type="InterPro" id="IPR032675">
    <property type="entry name" value="LRR_dom_sf"/>
</dbReference>
<dbReference type="InterPro" id="IPR050541">
    <property type="entry name" value="LRR_TM_domain-containing"/>
</dbReference>
<dbReference type="InterPro" id="IPR000372">
    <property type="entry name" value="LRRNT"/>
</dbReference>
<dbReference type="PANTHER" id="PTHR24369">
    <property type="entry name" value="ANTIGEN BSP, PUTATIVE-RELATED"/>
    <property type="match status" value="1"/>
</dbReference>
<dbReference type="PANTHER" id="PTHR24369:SF170">
    <property type="entry name" value="LEUCINE-RICH REPEAT-CONTAINING PROTEIN 3"/>
    <property type="match status" value="1"/>
</dbReference>
<dbReference type="Pfam" id="PF13855">
    <property type="entry name" value="LRR_8"/>
    <property type="match status" value="1"/>
</dbReference>
<dbReference type="Pfam" id="PF01462">
    <property type="entry name" value="LRRNT"/>
    <property type="match status" value="1"/>
</dbReference>
<dbReference type="SMART" id="SM00369">
    <property type="entry name" value="LRR_TYP"/>
    <property type="match status" value="3"/>
</dbReference>
<dbReference type="SMART" id="SM00013">
    <property type="entry name" value="LRRNT"/>
    <property type="match status" value="1"/>
</dbReference>
<dbReference type="SUPFAM" id="SSF52058">
    <property type="entry name" value="L domain-like"/>
    <property type="match status" value="1"/>
</dbReference>
<dbReference type="PROSITE" id="PS51450">
    <property type="entry name" value="LRR"/>
    <property type="match status" value="3"/>
</dbReference>
<accession>A6H793</accession>
<gene>
    <name type="primary">LRRC3</name>
</gene>
<proteinExistence type="evidence at transcript level"/>
<keyword id="KW-0433">Leucine-rich repeat</keyword>
<keyword id="KW-0472">Membrane</keyword>
<keyword id="KW-1185">Reference proteome</keyword>
<keyword id="KW-0677">Repeat</keyword>
<keyword id="KW-0732">Signal</keyword>
<keyword id="KW-0812">Transmembrane</keyword>
<keyword id="KW-1133">Transmembrane helix</keyword>
<sequence length="257" mass="28000">MGPTGRQSPSSLPVPAGGPCLLLLFCLRLGASCPQNCQCPDHAGAVAVHCSARGLQEVPRDIPADTVLLKLDANKIARIPNGAFQHLHQLRELDLSQNAIETIGPAAFSGLAGGLRLLDLSHNRLRRIPKDALGKLSAKIRLAHNPLHCECALQEALWELKLDPDSVDEIACHTSVQEEYVGKPLIQALDSGVSFCSVHHKTTDVAMLVTMFGWFAMVITYVVYYVRQNQEDARRHLEYLKSLPSTPMSKDPTSSAP</sequence>
<organism>
    <name type="scientific">Bos taurus</name>
    <name type="common">Bovine</name>
    <dbReference type="NCBI Taxonomy" id="9913"/>
    <lineage>
        <taxon>Eukaryota</taxon>
        <taxon>Metazoa</taxon>
        <taxon>Chordata</taxon>
        <taxon>Craniata</taxon>
        <taxon>Vertebrata</taxon>
        <taxon>Euteleostomi</taxon>
        <taxon>Mammalia</taxon>
        <taxon>Eutheria</taxon>
        <taxon>Laurasiatheria</taxon>
        <taxon>Artiodactyla</taxon>
        <taxon>Ruminantia</taxon>
        <taxon>Pecora</taxon>
        <taxon>Bovidae</taxon>
        <taxon>Bovinae</taxon>
        <taxon>Bos</taxon>
    </lineage>
</organism>
<protein>
    <recommendedName>
        <fullName>Leucine-rich repeat-containing protein 3</fullName>
    </recommendedName>
</protein>
<reference key="1">
    <citation type="submission" date="2007-06" db="EMBL/GenBank/DDBJ databases">
        <authorList>
            <consortium name="NIH - Mammalian Gene Collection (MGC) project"/>
        </authorList>
    </citation>
    <scope>NUCLEOTIDE SEQUENCE [LARGE SCALE MRNA]</scope>
    <source>
        <strain>Hereford</strain>
        <tissue>Hypothalamus</tissue>
    </source>
</reference>